<comment type="function">
    <text evidence="1">Binds the lower part of the 30S subunit head. Binds mRNA in the 70S ribosome, positioning it for translation.</text>
</comment>
<comment type="subunit">
    <text evidence="1">Part of the 30S ribosomal subunit. Forms a tight complex with proteins S10 and S14.</text>
</comment>
<comment type="similarity">
    <text evidence="1">Belongs to the universal ribosomal protein uS3 family.</text>
</comment>
<protein>
    <recommendedName>
        <fullName evidence="1">Small ribosomal subunit protein uS3</fullName>
    </recommendedName>
    <alternativeName>
        <fullName evidence="3">30S ribosomal protein S3</fullName>
    </alternativeName>
</protein>
<proteinExistence type="inferred from homology"/>
<evidence type="ECO:0000255" key="1">
    <source>
        <dbReference type="HAMAP-Rule" id="MF_01309"/>
    </source>
</evidence>
<evidence type="ECO:0000256" key="2">
    <source>
        <dbReference type="SAM" id="MobiDB-lite"/>
    </source>
</evidence>
<evidence type="ECO:0000305" key="3"/>
<reference key="1">
    <citation type="journal article" date="2008" name="J. Bacteriol.">
        <title>Complete genome sequence of the soil actinomycete Kocuria rhizophila.</title>
        <authorList>
            <person name="Takarada H."/>
            <person name="Sekine M."/>
            <person name="Kosugi H."/>
            <person name="Matsuo Y."/>
            <person name="Fujisawa T."/>
            <person name="Omata S."/>
            <person name="Kishi E."/>
            <person name="Shimizu A."/>
            <person name="Tsukatani N."/>
            <person name="Tanikawa S."/>
            <person name="Fujita N."/>
            <person name="Harayama S."/>
        </authorList>
    </citation>
    <scope>NUCLEOTIDE SEQUENCE [LARGE SCALE GENOMIC DNA]</scope>
    <source>
        <strain>ATCC 9341 / DSM 348 / NBRC 103217 / DC2201</strain>
    </source>
</reference>
<sequence>MGQKINPNGFRLGITTDHVSHWYADSNQPGQRYKDYIREDVKIRELMSKGMDRAGISKVEIERTRDRVRVDIHTARPGIVIGRRGAEADRIRGELEKLTGKQIQLNILEVKNPEIDAQLVAQGVAEQLASRVAFRRAMKKAIQSAQRAGAKGIRIQCAGRLGGAEMSRSEFYREGRVPLHTLRANIDYGFFEAKTTFGRIGVKVWIYKGDLTDKELAAQQAAAPSSRGRNDRRGGGGGERRRRPNDRNDRGGRRERDSAAAPQQNSAAEANNAEGGK</sequence>
<dbReference type="EMBL" id="AP009152">
    <property type="protein sequence ID" value="BAG28969.1"/>
    <property type="molecule type" value="Genomic_DNA"/>
</dbReference>
<dbReference type="RefSeq" id="WP_012397694.1">
    <property type="nucleotide sequence ID" value="NZ_VECX01000001.1"/>
</dbReference>
<dbReference type="SMR" id="B2GIZ9"/>
<dbReference type="STRING" id="378753.KRH_06220"/>
<dbReference type="KEGG" id="krh:KRH_06220"/>
<dbReference type="eggNOG" id="COG0092">
    <property type="taxonomic scope" value="Bacteria"/>
</dbReference>
<dbReference type="HOGENOM" id="CLU_058591_0_2_11"/>
<dbReference type="OrthoDB" id="9806396at2"/>
<dbReference type="Proteomes" id="UP000008838">
    <property type="component" value="Chromosome"/>
</dbReference>
<dbReference type="GO" id="GO:0022627">
    <property type="term" value="C:cytosolic small ribosomal subunit"/>
    <property type="evidence" value="ECO:0007669"/>
    <property type="project" value="TreeGrafter"/>
</dbReference>
<dbReference type="GO" id="GO:0003729">
    <property type="term" value="F:mRNA binding"/>
    <property type="evidence" value="ECO:0007669"/>
    <property type="project" value="UniProtKB-UniRule"/>
</dbReference>
<dbReference type="GO" id="GO:0019843">
    <property type="term" value="F:rRNA binding"/>
    <property type="evidence" value="ECO:0007669"/>
    <property type="project" value="UniProtKB-UniRule"/>
</dbReference>
<dbReference type="GO" id="GO:0003735">
    <property type="term" value="F:structural constituent of ribosome"/>
    <property type="evidence" value="ECO:0007669"/>
    <property type="project" value="InterPro"/>
</dbReference>
<dbReference type="GO" id="GO:0006412">
    <property type="term" value="P:translation"/>
    <property type="evidence" value="ECO:0007669"/>
    <property type="project" value="UniProtKB-UniRule"/>
</dbReference>
<dbReference type="CDD" id="cd02412">
    <property type="entry name" value="KH-II_30S_S3"/>
    <property type="match status" value="1"/>
</dbReference>
<dbReference type="FunFam" id="3.30.1140.32:FF:000002">
    <property type="entry name" value="30S ribosomal protein S3"/>
    <property type="match status" value="1"/>
</dbReference>
<dbReference type="FunFam" id="3.30.300.20:FF:000001">
    <property type="entry name" value="30S ribosomal protein S3"/>
    <property type="match status" value="1"/>
</dbReference>
<dbReference type="Gene3D" id="3.30.300.20">
    <property type="match status" value="1"/>
</dbReference>
<dbReference type="Gene3D" id="3.30.1140.32">
    <property type="entry name" value="Ribosomal protein S3, C-terminal domain"/>
    <property type="match status" value="1"/>
</dbReference>
<dbReference type="HAMAP" id="MF_01309_B">
    <property type="entry name" value="Ribosomal_uS3_B"/>
    <property type="match status" value="1"/>
</dbReference>
<dbReference type="InterPro" id="IPR004087">
    <property type="entry name" value="KH_dom"/>
</dbReference>
<dbReference type="InterPro" id="IPR015946">
    <property type="entry name" value="KH_dom-like_a/b"/>
</dbReference>
<dbReference type="InterPro" id="IPR004044">
    <property type="entry name" value="KH_dom_type_2"/>
</dbReference>
<dbReference type="InterPro" id="IPR009019">
    <property type="entry name" value="KH_sf_prok-type"/>
</dbReference>
<dbReference type="InterPro" id="IPR036419">
    <property type="entry name" value="Ribosomal_S3_C_sf"/>
</dbReference>
<dbReference type="InterPro" id="IPR005704">
    <property type="entry name" value="Ribosomal_uS3_bac-typ"/>
</dbReference>
<dbReference type="InterPro" id="IPR001351">
    <property type="entry name" value="Ribosomal_uS3_C"/>
</dbReference>
<dbReference type="InterPro" id="IPR018280">
    <property type="entry name" value="Ribosomal_uS3_CS"/>
</dbReference>
<dbReference type="NCBIfam" id="TIGR01009">
    <property type="entry name" value="rpsC_bact"/>
    <property type="match status" value="1"/>
</dbReference>
<dbReference type="PANTHER" id="PTHR11760">
    <property type="entry name" value="30S/40S RIBOSOMAL PROTEIN S3"/>
    <property type="match status" value="1"/>
</dbReference>
<dbReference type="PANTHER" id="PTHR11760:SF19">
    <property type="entry name" value="SMALL RIBOSOMAL SUBUNIT PROTEIN US3C"/>
    <property type="match status" value="1"/>
</dbReference>
<dbReference type="Pfam" id="PF07650">
    <property type="entry name" value="KH_2"/>
    <property type="match status" value="1"/>
</dbReference>
<dbReference type="Pfam" id="PF00189">
    <property type="entry name" value="Ribosomal_S3_C"/>
    <property type="match status" value="1"/>
</dbReference>
<dbReference type="SMART" id="SM00322">
    <property type="entry name" value="KH"/>
    <property type="match status" value="1"/>
</dbReference>
<dbReference type="SUPFAM" id="SSF54814">
    <property type="entry name" value="Prokaryotic type KH domain (KH-domain type II)"/>
    <property type="match status" value="1"/>
</dbReference>
<dbReference type="SUPFAM" id="SSF54821">
    <property type="entry name" value="Ribosomal protein S3 C-terminal domain"/>
    <property type="match status" value="1"/>
</dbReference>
<dbReference type="PROSITE" id="PS50823">
    <property type="entry name" value="KH_TYPE_2"/>
    <property type="match status" value="1"/>
</dbReference>
<dbReference type="PROSITE" id="PS00548">
    <property type="entry name" value="RIBOSOMAL_S3"/>
    <property type="match status" value="1"/>
</dbReference>
<feature type="chain" id="PRO_1000140981" description="Small ribosomal subunit protein uS3">
    <location>
        <begin position="1"/>
        <end position="277"/>
    </location>
</feature>
<feature type="domain" description="KH type-2" evidence="1">
    <location>
        <begin position="43"/>
        <end position="111"/>
    </location>
</feature>
<feature type="region of interest" description="Disordered" evidence="2">
    <location>
        <begin position="217"/>
        <end position="277"/>
    </location>
</feature>
<feature type="compositionally biased region" description="Basic and acidic residues" evidence="2">
    <location>
        <begin position="245"/>
        <end position="258"/>
    </location>
</feature>
<feature type="compositionally biased region" description="Low complexity" evidence="2">
    <location>
        <begin position="259"/>
        <end position="277"/>
    </location>
</feature>
<name>RS3_KOCRD</name>
<accession>B2GIZ9</accession>
<keyword id="KW-1185">Reference proteome</keyword>
<keyword id="KW-0687">Ribonucleoprotein</keyword>
<keyword id="KW-0689">Ribosomal protein</keyword>
<keyword id="KW-0694">RNA-binding</keyword>
<keyword id="KW-0699">rRNA-binding</keyword>
<organism>
    <name type="scientific">Kocuria rhizophila (strain ATCC 9341 / DSM 348 / NBRC 103217 / DC2201)</name>
    <dbReference type="NCBI Taxonomy" id="378753"/>
    <lineage>
        <taxon>Bacteria</taxon>
        <taxon>Bacillati</taxon>
        <taxon>Actinomycetota</taxon>
        <taxon>Actinomycetes</taxon>
        <taxon>Micrococcales</taxon>
        <taxon>Micrococcaceae</taxon>
        <taxon>Kocuria</taxon>
    </lineage>
</organism>
<gene>
    <name evidence="1" type="primary">rpsC</name>
    <name type="ordered locus">KRH_06220</name>
</gene>